<evidence type="ECO:0000250" key="1">
    <source>
        <dbReference type="UniProtKB" id="Q96AG3"/>
    </source>
</evidence>
<evidence type="ECO:0000255" key="2"/>
<evidence type="ECO:0000256" key="3">
    <source>
        <dbReference type="SAM" id="MobiDB-lite"/>
    </source>
</evidence>
<evidence type="ECO:0000269" key="4">
    <source>
    </source>
</evidence>
<evidence type="ECO:0000269" key="5">
    <source>
    </source>
</evidence>
<evidence type="ECO:0000305" key="6"/>
<comment type="function">
    <text evidence="1 5">Transmembrane protein of the mitochondrial outer membrane that controls mitochondrial organization (By similarity) (PubMed:27543974). May regulate the biogenesis and dynamics of mitochondrial cristae, the inwards folds of the inner mitochondrial membrane (By similarity). Could regulate mitochondrial lipid homeostasis and thereby mitochondrial fission (By similarity).</text>
</comment>
<comment type="subcellular location">
    <subcellularLocation>
        <location evidence="1">Mitochondrion outer membrane</location>
        <topology evidence="2">Multi-pass membrane protein</topology>
    </subcellularLocation>
</comment>
<comment type="disruption phenotype">
    <text evidence="4 5">Morpholino knockdown of the protein produces embryos with a curly tail morphology and impaired swimming, suggesting dysfunction of neural circuits (PubMed:26168012). Spinal motor neurons have shortened axon tracts due to degeneration of neuronal processes (PubMed:27543974). Mitochondria in knockdown embryos show incomplete fission, abnormal aggregation and abnormal cell localization (PubMed:26168012, PubMed:27543974).</text>
</comment>
<comment type="similarity">
    <text evidence="6">Belongs to the mitochondrial carrier (TC 2.A.29) family.</text>
</comment>
<sequence length="405" mass="44910">MTSRRPDSFEGLGYRGREDPAFSGGYSGRSFNNSSSSDLQNWVTTPPDIPGSRNLHFDDRTPQFETAPDEAQSAAPPSEQLNRFAGFGIGLASLFTENVLAHPCIVFRRQCQVNYHARCYHLSPMTAISVMYNVTKTQGPKALWKGMGSTFVVQGVTLGTEGIISECTPLPRELSHKWNPKQVVGHLVLKGLTYVVAMPFYSASLIETVQSEIIRDNPGILDCVKEGLGRVMGMGIPHSKRLLPLWNLVLPTVLHGILHYIISSSIQRLVLYLLRRRNNGSPKHSSPGSGMDTVQSMLDAYFPELMASFAASLCADVLLFPLETVLHRLHIQGTRTIIDNTDLGFEVLPINTQYEGMRDCINAIRREEGTMGFYKGFGSIVVQYSLHATVLQITKMIYSTLLRNA</sequence>
<reference key="1">
    <citation type="journal article" date="2013" name="Nature">
        <title>The zebrafish reference genome sequence and its relationship to the human genome.</title>
        <authorList>
            <person name="Howe K."/>
            <person name="Clark M.D."/>
            <person name="Torroja C.F."/>
            <person name="Torrance J."/>
            <person name="Berthelot C."/>
            <person name="Muffato M."/>
            <person name="Collins J.E."/>
            <person name="Humphray S."/>
            <person name="McLaren K."/>
            <person name="Matthews L."/>
            <person name="McLaren S."/>
            <person name="Sealy I."/>
            <person name="Caccamo M."/>
            <person name="Churcher C."/>
            <person name="Scott C."/>
            <person name="Barrett J.C."/>
            <person name="Koch R."/>
            <person name="Rauch G.J."/>
            <person name="White S."/>
            <person name="Chow W."/>
            <person name="Kilian B."/>
            <person name="Quintais L.T."/>
            <person name="Guerra-Assuncao J.A."/>
            <person name="Zhou Y."/>
            <person name="Gu Y."/>
            <person name="Yen J."/>
            <person name="Vogel J.H."/>
            <person name="Eyre T."/>
            <person name="Redmond S."/>
            <person name="Banerjee R."/>
            <person name="Chi J."/>
            <person name="Fu B."/>
            <person name="Langley E."/>
            <person name="Maguire S.F."/>
            <person name="Laird G.K."/>
            <person name="Lloyd D."/>
            <person name="Kenyon E."/>
            <person name="Donaldson S."/>
            <person name="Sehra H."/>
            <person name="Almeida-King J."/>
            <person name="Loveland J."/>
            <person name="Trevanion S."/>
            <person name="Jones M."/>
            <person name="Quail M."/>
            <person name="Willey D."/>
            <person name="Hunt A."/>
            <person name="Burton J."/>
            <person name="Sims S."/>
            <person name="McLay K."/>
            <person name="Plumb B."/>
            <person name="Davis J."/>
            <person name="Clee C."/>
            <person name="Oliver K."/>
            <person name="Clark R."/>
            <person name="Riddle C."/>
            <person name="Elliot D."/>
            <person name="Threadgold G."/>
            <person name="Harden G."/>
            <person name="Ware D."/>
            <person name="Begum S."/>
            <person name="Mortimore B."/>
            <person name="Kerry G."/>
            <person name="Heath P."/>
            <person name="Phillimore B."/>
            <person name="Tracey A."/>
            <person name="Corby N."/>
            <person name="Dunn M."/>
            <person name="Johnson C."/>
            <person name="Wood J."/>
            <person name="Clark S."/>
            <person name="Pelan S."/>
            <person name="Griffiths G."/>
            <person name="Smith M."/>
            <person name="Glithero R."/>
            <person name="Howden P."/>
            <person name="Barker N."/>
            <person name="Lloyd C."/>
            <person name="Stevens C."/>
            <person name="Harley J."/>
            <person name="Holt K."/>
            <person name="Panagiotidis G."/>
            <person name="Lovell J."/>
            <person name="Beasley H."/>
            <person name="Henderson C."/>
            <person name="Gordon D."/>
            <person name="Auger K."/>
            <person name="Wright D."/>
            <person name="Collins J."/>
            <person name="Raisen C."/>
            <person name="Dyer L."/>
            <person name="Leung K."/>
            <person name="Robertson L."/>
            <person name="Ambridge K."/>
            <person name="Leongamornlert D."/>
            <person name="McGuire S."/>
            <person name="Gilderthorp R."/>
            <person name="Griffiths C."/>
            <person name="Manthravadi D."/>
            <person name="Nichol S."/>
            <person name="Barker G."/>
            <person name="Whitehead S."/>
            <person name="Kay M."/>
            <person name="Brown J."/>
            <person name="Murnane C."/>
            <person name="Gray E."/>
            <person name="Humphries M."/>
            <person name="Sycamore N."/>
            <person name="Barker D."/>
            <person name="Saunders D."/>
            <person name="Wallis J."/>
            <person name="Babbage A."/>
            <person name="Hammond S."/>
            <person name="Mashreghi-Mohammadi M."/>
            <person name="Barr L."/>
            <person name="Martin S."/>
            <person name="Wray P."/>
            <person name="Ellington A."/>
            <person name="Matthews N."/>
            <person name="Ellwood M."/>
            <person name="Woodmansey R."/>
            <person name="Clark G."/>
            <person name="Cooper J."/>
            <person name="Tromans A."/>
            <person name="Grafham D."/>
            <person name="Skuce C."/>
            <person name="Pandian R."/>
            <person name="Andrews R."/>
            <person name="Harrison E."/>
            <person name="Kimberley A."/>
            <person name="Garnett J."/>
            <person name="Fosker N."/>
            <person name="Hall R."/>
            <person name="Garner P."/>
            <person name="Kelly D."/>
            <person name="Bird C."/>
            <person name="Palmer S."/>
            <person name="Gehring I."/>
            <person name="Berger A."/>
            <person name="Dooley C.M."/>
            <person name="Ersan-Urun Z."/>
            <person name="Eser C."/>
            <person name="Geiger H."/>
            <person name="Geisler M."/>
            <person name="Karotki L."/>
            <person name="Kirn A."/>
            <person name="Konantz J."/>
            <person name="Konantz M."/>
            <person name="Oberlander M."/>
            <person name="Rudolph-Geiger S."/>
            <person name="Teucke M."/>
            <person name="Lanz C."/>
            <person name="Raddatz G."/>
            <person name="Osoegawa K."/>
            <person name="Zhu B."/>
            <person name="Rapp A."/>
            <person name="Widaa S."/>
            <person name="Langford C."/>
            <person name="Yang F."/>
            <person name="Schuster S.C."/>
            <person name="Carter N.P."/>
            <person name="Harrow J."/>
            <person name="Ning Z."/>
            <person name="Herrero J."/>
            <person name="Searle S.M."/>
            <person name="Enright A."/>
            <person name="Geisler R."/>
            <person name="Plasterk R.H."/>
            <person name="Lee C."/>
            <person name="Westerfield M."/>
            <person name="de Jong P.J."/>
            <person name="Zon L.I."/>
            <person name="Postlethwait J.H."/>
            <person name="Nusslein-Volhard C."/>
            <person name="Hubbard T.J."/>
            <person name="Roest Crollius H."/>
            <person name="Rogers J."/>
            <person name="Stemple D.L."/>
        </authorList>
    </citation>
    <scope>NUCLEOTIDE SEQUENCE [LARGE SCALE GENOMIC DNA]</scope>
    <source>
        <strain>Tuebingen</strain>
    </source>
</reference>
<reference key="2">
    <citation type="submission" date="2004-07" db="EMBL/GenBank/DDBJ databases">
        <authorList>
            <consortium name="NIH - Zebrafish Gene Collection (ZGC) project"/>
        </authorList>
    </citation>
    <scope>NUCLEOTIDE SEQUENCE [LARGE SCALE MRNA]</scope>
    <source>
        <tissue>Brain</tissue>
    </source>
</reference>
<reference key="3">
    <citation type="journal article" date="2015" name="Nat. Genet.">
        <title>Mutations in SLC25A46, encoding a UGO1-like protein, cause an optic atrophy spectrum disorder.</title>
        <authorList>
            <person name="Abrams A.J."/>
            <person name="Hufnagel R.B."/>
            <person name="Rebelo A."/>
            <person name="Zanna C."/>
            <person name="Patel N."/>
            <person name="Gonzalez M.A."/>
            <person name="Campeanu I.J."/>
            <person name="Griffin L.B."/>
            <person name="Groenewald S."/>
            <person name="Strickland A.V."/>
            <person name="Tao F."/>
            <person name="Speziani F."/>
            <person name="Abreu L."/>
            <person name="Schuele R."/>
            <person name="Caporali L."/>
            <person name="La Morgia C."/>
            <person name="Maresca A."/>
            <person name="Liguori R."/>
            <person name="Lodi R."/>
            <person name="Ahmed Z.M."/>
            <person name="Sund K.L."/>
            <person name="Wang X."/>
            <person name="Krueger L.A."/>
            <person name="Peng Y."/>
            <person name="Prada C.E."/>
            <person name="Prows C.A."/>
            <person name="Schorry E.K."/>
            <person name="Antonellis A."/>
            <person name="Zimmerman H.H."/>
            <person name="Abdul-Rahman O.A."/>
            <person name="Yang Y."/>
            <person name="Downes S.M."/>
            <person name="Prince J."/>
            <person name="Fontanesi F."/>
            <person name="Barrientos A."/>
            <person name="Nemeth A.H."/>
            <person name="Carelli V."/>
            <person name="Huang T."/>
            <person name="Zuchner S."/>
            <person name="Dallman J.E."/>
        </authorList>
    </citation>
    <scope>DISRUPTION PHENOTYPE</scope>
</reference>
<reference key="4">
    <citation type="journal article" date="2016" name="Brain">
        <title>Loss of function of SLC25A46 causes lethal congenital pontocerebellar hypoplasia.</title>
        <authorList>
            <person name="Wan J."/>
            <person name="Steffen J."/>
            <person name="Yourshaw M."/>
            <person name="Mamsa H."/>
            <person name="Andersen E."/>
            <person name="Rudnik-Schoeneborn S."/>
            <person name="Pope K."/>
            <person name="Howell K.B."/>
            <person name="McLean C.A."/>
            <person name="Kornberg A.J."/>
            <person name="Joseph J."/>
            <person name="Lockhart P.J."/>
            <person name="Zerres K."/>
            <person name="Ryan M.M."/>
            <person name="Nelson S.F."/>
            <person name="Koehler C.M."/>
            <person name="Jen J.C."/>
        </authorList>
    </citation>
    <scope>FUNCTION</scope>
    <scope>DISRUPTION PHENOTYPE</scope>
</reference>
<name>S2546_DANRE</name>
<dbReference type="EMBL" id="CT027584">
    <property type="protein sequence ID" value="CAM14355.1"/>
    <property type="molecule type" value="Genomic_DNA"/>
</dbReference>
<dbReference type="EMBL" id="BX294395">
    <property type="protein sequence ID" value="CAM14355.1"/>
    <property type="status" value="JOINED"/>
    <property type="molecule type" value="Genomic_DNA"/>
</dbReference>
<dbReference type="EMBL" id="BX294395">
    <property type="protein sequence ID" value="CAM56400.1"/>
    <property type="molecule type" value="Genomic_DNA"/>
</dbReference>
<dbReference type="EMBL" id="CT027584">
    <property type="protein sequence ID" value="CAM56400.1"/>
    <property type="status" value="JOINED"/>
    <property type="molecule type" value="Genomic_DNA"/>
</dbReference>
<dbReference type="EMBL" id="BC076244">
    <property type="protein sequence ID" value="AAH76244.1"/>
    <property type="molecule type" value="mRNA"/>
</dbReference>
<dbReference type="RefSeq" id="NP_001002558.1">
    <property type="nucleotide sequence ID" value="NM_001002558.1"/>
</dbReference>
<dbReference type="FunCoup" id="Q6DGU5">
    <property type="interactions" value="1340"/>
</dbReference>
<dbReference type="STRING" id="7955.ENSDARP00000050965"/>
<dbReference type="PaxDb" id="7955-ENSDARP00000050965"/>
<dbReference type="Ensembl" id="ENSDART00000050966">
    <property type="protein sequence ID" value="ENSDARP00000050965"/>
    <property type="gene ID" value="ENSDARG00000035181"/>
</dbReference>
<dbReference type="GeneID" id="436831"/>
<dbReference type="KEGG" id="dre:436831"/>
<dbReference type="AGR" id="ZFIN:ZDB-GENE-040718-296"/>
<dbReference type="CTD" id="91137"/>
<dbReference type="ZFIN" id="ZDB-GENE-040718-296">
    <property type="gene designation" value="slc25a46"/>
</dbReference>
<dbReference type="eggNOG" id="KOG2954">
    <property type="taxonomic scope" value="Eukaryota"/>
</dbReference>
<dbReference type="HOGENOM" id="CLU_047010_0_0_1"/>
<dbReference type="InParanoid" id="Q6DGU5"/>
<dbReference type="OMA" id="RQCQVNH"/>
<dbReference type="OrthoDB" id="2403262at2759"/>
<dbReference type="PhylomeDB" id="Q6DGU5"/>
<dbReference type="TreeFam" id="TF313365"/>
<dbReference type="PRO" id="PR:Q6DGU5"/>
<dbReference type="Proteomes" id="UP000000437">
    <property type="component" value="Chromosome 5"/>
</dbReference>
<dbReference type="Bgee" id="ENSDARG00000035181">
    <property type="expression patterns" value="Expressed in brain and 29 other cell types or tissues"/>
</dbReference>
<dbReference type="GO" id="GO:0005741">
    <property type="term" value="C:mitochondrial outer membrane"/>
    <property type="evidence" value="ECO:0000250"/>
    <property type="project" value="UniProtKB"/>
</dbReference>
<dbReference type="GO" id="GO:0043005">
    <property type="term" value="C:neuron projection"/>
    <property type="evidence" value="ECO:0000315"/>
    <property type="project" value="ZFIN"/>
</dbReference>
<dbReference type="GO" id="GO:0061564">
    <property type="term" value="P:axon development"/>
    <property type="evidence" value="ECO:0000315"/>
    <property type="project" value="ZFIN"/>
</dbReference>
<dbReference type="GO" id="GO:0000266">
    <property type="term" value="P:mitochondrial fission"/>
    <property type="evidence" value="ECO:0000315"/>
    <property type="project" value="ZFIN"/>
</dbReference>
<dbReference type="GO" id="GO:0090149">
    <property type="term" value="P:mitochondrial membrane fission"/>
    <property type="evidence" value="ECO:0007669"/>
    <property type="project" value="InterPro"/>
</dbReference>
<dbReference type="GO" id="GO:0031175">
    <property type="term" value="P:neuron projection development"/>
    <property type="evidence" value="ECO:0000315"/>
    <property type="project" value="ZFIN"/>
</dbReference>
<dbReference type="Gene3D" id="1.50.40.10">
    <property type="entry name" value="Mitochondrial carrier domain"/>
    <property type="match status" value="1"/>
</dbReference>
<dbReference type="InterPro" id="IPR018108">
    <property type="entry name" value="Mitochondrial_sb/sol_carrier"/>
</dbReference>
<dbReference type="InterPro" id="IPR023395">
    <property type="entry name" value="Mt_carrier_dom_sf"/>
</dbReference>
<dbReference type="InterPro" id="IPR039158">
    <property type="entry name" value="SLC25A46"/>
</dbReference>
<dbReference type="PANTHER" id="PTHR21252:SF2">
    <property type="entry name" value="MITOCHONDRIAL OUTER MEMBRANE PROTEIN SLC25A46"/>
    <property type="match status" value="1"/>
</dbReference>
<dbReference type="PANTHER" id="PTHR21252">
    <property type="entry name" value="TB1 PROTEIN-RELATED"/>
    <property type="match status" value="1"/>
</dbReference>
<dbReference type="Pfam" id="PF00153">
    <property type="entry name" value="Mito_carr"/>
    <property type="match status" value="2"/>
</dbReference>
<dbReference type="SUPFAM" id="SSF103506">
    <property type="entry name" value="Mitochondrial carrier"/>
    <property type="match status" value="1"/>
</dbReference>
<dbReference type="PROSITE" id="PS50920">
    <property type="entry name" value="SOLCAR"/>
    <property type="match status" value="1"/>
</dbReference>
<organism>
    <name type="scientific">Danio rerio</name>
    <name type="common">Zebrafish</name>
    <name type="synonym">Brachydanio rerio</name>
    <dbReference type="NCBI Taxonomy" id="7955"/>
    <lineage>
        <taxon>Eukaryota</taxon>
        <taxon>Metazoa</taxon>
        <taxon>Chordata</taxon>
        <taxon>Craniata</taxon>
        <taxon>Vertebrata</taxon>
        <taxon>Euteleostomi</taxon>
        <taxon>Actinopterygii</taxon>
        <taxon>Neopterygii</taxon>
        <taxon>Teleostei</taxon>
        <taxon>Ostariophysi</taxon>
        <taxon>Cypriniformes</taxon>
        <taxon>Danionidae</taxon>
        <taxon>Danioninae</taxon>
        <taxon>Danio</taxon>
    </lineage>
</organism>
<proteinExistence type="evidence at transcript level"/>
<accession>Q6DGU5</accession>
<keyword id="KW-0472">Membrane</keyword>
<keyword id="KW-0496">Mitochondrion</keyword>
<keyword id="KW-1000">Mitochondrion outer membrane</keyword>
<keyword id="KW-1185">Reference proteome</keyword>
<keyword id="KW-0677">Repeat</keyword>
<keyword id="KW-0812">Transmembrane</keyword>
<keyword id="KW-1133">Transmembrane helix</keyword>
<keyword id="KW-0813">Transport</keyword>
<feature type="chain" id="PRO_0000291832" description="Mitochondrial outer membrane protein SLC25A46">
    <location>
        <begin position="1"/>
        <end position="405"/>
    </location>
</feature>
<feature type="transmembrane region" description="Helical; Name=1" evidence="2">
    <location>
        <begin position="87"/>
        <end position="107"/>
    </location>
</feature>
<feature type="transmembrane region" description="Helical; Name=2" evidence="2">
    <location>
        <begin position="151"/>
        <end position="171"/>
    </location>
</feature>
<feature type="transmembrane region" description="Helical; Name=3" evidence="2">
    <location>
        <begin position="183"/>
        <end position="203"/>
    </location>
</feature>
<feature type="transmembrane region" description="Helical; Name=4" evidence="2">
    <location>
        <begin position="242"/>
        <end position="262"/>
    </location>
</feature>
<feature type="transmembrane region" description="Helical; Name=5" evidence="2">
    <location>
        <begin position="302"/>
        <end position="322"/>
    </location>
</feature>
<feature type="transmembrane region" description="Helical; Name=6" evidence="2">
    <location>
        <begin position="371"/>
        <end position="391"/>
    </location>
</feature>
<feature type="repeat" description="Solcar 1">
    <location>
        <begin position="80"/>
        <end position="171"/>
    </location>
</feature>
<feature type="repeat" description="Solcar 2">
    <location>
        <begin position="299"/>
        <end position="401"/>
    </location>
</feature>
<feature type="region of interest" description="Disordered" evidence="3">
    <location>
        <begin position="1"/>
        <end position="77"/>
    </location>
</feature>
<feature type="compositionally biased region" description="Low complexity" evidence="3">
    <location>
        <begin position="22"/>
        <end position="37"/>
    </location>
</feature>
<gene>
    <name type="primary">slc25a46</name>
    <name type="ORF">si:ch211-220b11.2</name>
    <name type="ORF">zgc:92767</name>
</gene>
<protein>
    <recommendedName>
        <fullName evidence="1">Mitochondrial outer membrane protein SLC25A46</fullName>
    </recommendedName>
    <alternativeName>
        <fullName>Solute carrier family 25 member 46</fullName>
    </alternativeName>
</protein>